<reference key="1">
    <citation type="journal article" date="2006" name="Proc. Natl. Acad. Sci. U.S.A.">
        <title>Molecular genetic anatomy of inter- and intraserotype variation in the human bacterial pathogen group A Streptococcus.</title>
        <authorList>
            <person name="Beres S.B."/>
            <person name="Richter E.W."/>
            <person name="Nagiec M.J."/>
            <person name="Sumby P."/>
            <person name="Porcella S.F."/>
            <person name="DeLeo F.R."/>
            <person name="Musser J.M."/>
        </authorList>
    </citation>
    <scope>NUCLEOTIDE SEQUENCE [LARGE SCALE GENOMIC DNA]</scope>
    <source>
        <strain>MGAS9429</strain>
    </source>
</reference>
<comment type="function">
    <text evidence="1">Required for the formation of a threonylcarbamoyl group on adenosine at position 37 (t(6)A37) in tRNAs that read codons beginning with adenine. Is involved in the transfer of the threonylcarbamoyl moiety of threonylcarbamoyl-AMP (TC-AMP) to the N6 group of A37, together with TsaE and TsaB. TsaD likely plays a direct catalytic role in this reaction.</text>
</comment>
<comment type="catalytic activity">
    <reaction evidence="1">
        <text>L-threonylcarbamoyladenylate + adenosine(37) in tRNA = N(6)-L-threonylcarbamoyladenosine(37) in tRNA + AMP + H(+)</text>
        <dbReference type="Rhea" id="RHEA:37059"/>
        <dbReference type="Rhea" id="RHEA-COMP:10162"/>
        <dbReference type="Rhea" id="RHEA-COMP:10163"/>
        <dbReference type="ChEBI" id="CHEBI:15378"/>
        <dbReference type="ChEBI" id="CHEBI:73682"/>
        <dbReference type="ChEBI" id="CHEBI:74411"/>
        <dbReference type="ChEBI" id="CHEBI:74418"/>
        <dbReference type="ChEBI" id="CHEBI:456215"/>
        <dbReference type="EC" id="2.3.1.234"/>
    </reaction>
</comment>
<comment type="cofactor">
    <cofactor evidence="1">
        <name>Fe(2+)</name>
        <dbReference type="ChEBI" id="CHEBI:29033"/>
    </cofactor>
    <text evidence="1">Binds 1 Fe(2+) ion per subunit.</text>
</comment>
<comment type="subcellular location">
    <subcellularLocation>
        <location evidence="1">Cytoplasm</location>
    </subcellularLocation>
</comment>
<comment type="similarity">
    <text evidence="1">Belongs to the KAE1 / TsaD family.</text>
</comment>
<accession>Q1JK40</accession>
<sequence>MTDRYILAVESSCDETSVAILKNESTLLSNVIASQVESHKRFGGVVPEVASRHHVEVITTCFEDALQEAGISASDLSAVAVTYGPGLVGALLVGLAAAKAFAWANHLPLIPVNHMAGHLMAAREQKPLVYPLIALLVSGGHTELVYVPEPGDYHIIGETRDDAVGEAYDKVGRVMGLTYPAGREIDQLAHKGQDTYHFPRAMITEDHLEFSFSGLKSAFINLHHNAKQKGDELILEDLCASFQAAVLDILLAKTKKALSRYPAKMLVVAGGVAANQGLRDRLAQEITHIEVVIPKLRLCGDNAGMIALAAAIEYDKQHFANMSLNAKPSLAFDQFPDSFVIN</sequence>
<dbReference type="EC" id="2.3.1.234" evidence="1"/>
<dbReference type="EMBL" id="CP000259">
    <property type="protein sequence ID" value="ABF32783.1"/>
    <property type="molecule type" value="Genomic_DNA"/>
</dbReference>
<dbReference type="RefSeq" id="WP_002988178.1">
    <property type="nucleotide sequence ID" value="NC_008021.1"/>
</dbReference>
<dbReference type="SMR" id="Q1JK40"/>
<dbReference type="GeneID" id="69900251"/>
<dbReference type="KEGG" id="spk:MGAS9429_Spy1596"/>
<dbReference type="HOGENOM" id="CLU_023208_0_2_9"/>
<dbReference type="Proteomes" id="UP000002433">
    <property type="component" value="Chromosome"/>
</dbReference>
<dbReference type="GO" id="GO:0005737">
    <property type="term" value="C:cytoplasm"/>
    <property type="evidence" value="ECO:0007669"/>
    <property type="project" value="UniProtKB-SubCell"/>
</dbReference>
<dbReference type="GO" id="GO:0005506">
    <property type="term" value="F:iron ion binding"/>
    <property type="evidence" value="ECO:0007669"/>
    <property type="project" value="UniProtKB-UniRule"/>
</dbReference>
<dbReference type="GO" id="GO:0061711">
    <property type="term" value="F:N(6)-L-threonylcarbamoyladenine synthase activity"/>
    <property type="evidence" value="ECO:0007669"/>
    <property type="project" value="UniProtKB-EC"/>
</dbReference>
<dbReference type="GO" id="GO:0002949">
    <property type="term" value="P:tRNA threonylcarbamoyladenosine modification"/>
    <property type="evidence" value="ECO:0007669"/>
    <property type="project" value="UniProtKB-UniRule"/>
</dbReference>
<dbReference type="CDD" id="cd24133">
    <property type="entry name" value="ASKHA_NBD_TsaD_bac"/>
    <property type="match status" value="1"/>
</dbReference>
<dbReference type="FunFam" id="3.30.420.40:FF:000012">
    <property type="entry name" value="tRNA N6-adenosine threonylcarbamoyltransferase"/>
    <property type="match status" value="1"/>
</dbReference>
<dbReference type="FunFam" id="3.30.420.40:FF:000040">
    <property type="entry name" value="tRNA N6-adenosine threonylcarbamoyltransferase"/>
    <property type="match status" value="1"/>
</dbReference>
<dbReference type="Gene3D" id="3.30.420.40">
    <property type="match status" value="2"/>
</dbReference>
<dbReference type="HAMAP" id="MF_01445">
    <property type="entry name" value="TsaD"/>
    <property type="match status" value="1"/>
</dbReference>
<dbReference type="InterPro" id="IPR043129">
    <property type="entry name" value="ATPase_NBD"/>
</dbReference>
<dbReference type="InterPro" id="IPR000905">
    <property type="entry name" value="Gcp-like_dom"/>
</dbReference>
<dbReference type="InterPro" id="IPR017861">
    <property type="entry name" value="KAE1/TsaD"/>
</dbReference>
<dbReference type="InterPro" id="IPR022450">
    <property type="entry name" value="TsaD"/>
</dbReference>
<dbReference type="NCBIfam" id="TIGR00329">
    <property type="entry name" value="gcp_kae1"/>
    <property type="match status" value="1"/>
</dbReference>
<dbReference type="NCBIfam" id="TIGR03723">
    <property type="entry name" value="T6A_TsaD_YgjD"/>
    <property type="match status" value="1"/>
</dbReference>
<dbReference type="PANTHER" id="PTHR11735">
    <property type="entry name" value="TRNA N6-ADENOSINE THREONYLCARBAMOYLTRANSFERASE"/>
    <property type="match status" value="1"/>
</dbReference>
<dbReference type="PANTHER" id="PTHR11735:SF6">
    <property type="entry name" value="TRNA N6-ADENOSINE THREONYLCARBAMOYLTRANSFERASE, MITOCHONDRIAL"/>
    <property type="match status" value="1"/>
</dbReference>
<dbReference type="Pfam" id="PF00814">
    <property type="entry name" value="TsaD"/>
    <property type="match status" value="1"/>
</dbReference>
<dbReference type="PRINTS" id="PR00789">
    <property type="entry name" value="OSIALOPTASE"/>
</dbReference>
<dbReference type="SUPFAM" id="SSF53067">
    <property type="entry name" value="Actin-like ATPase domain"/>
    <property type="match status" value="1"/>
</dbReference>
<protein>
    <recommendedName>
        <fullName evidence="1">tRNA N6-adenosine threonylcarbamoyltransferase</fullName>
        <ecNumber evidence="1">2.3.1.234</ecNumber>
    </recommendedName>
    <alternativeName>
        <fullName evidence="1">N6-L-threonylcarbamoyladenine synthase</fullName>
        <shortName evidence="1">t(6)A synthase</shortName>
    </alternativeName>
    <alternativeName>
        <fullName evidence="1">t(6)A37 threonylcarbamoyladenosine biosynthesis protein TsaD</fullName>
    </alternativeName>
    <alternativeName>
        <fullName evidence="1">tRNA threonylcarbamoyladenosine biosynthesis protein TsaD</fullName>
    </alternativeName>
</protein>
<keyword id="KW-0012">Acyltransferase</keyword>
<keyword id="KW-0963">Cytoplasm</keyword>
<keyword id="KW-0408">Iron</keyword>
<keyword id="KW-0479">Metal-binding</keyword>
<keyword id="KW-0808">Transferase</keyword>
<keyword id="KW-0819">tRNA processing</keyword>
<evidence type="ECO:0000255" key="1">
    <source>
        <dbReference type="HAMAP-Rule" id="MF_01445"/>
    </source>
</evidence>
<name>TSAD_STRPC</name>
<organism>
    <name type="scientific">Streptococcus pyogenes serotype M12 (strain MGAS9429)</name>
    <dbReference type="NCBI Taxonomy" id="370551"/>
    <lineage>
        <taxon>Bacteria</taxon>
        <taxon>Bacillati</taxon>
        <taxon>Bacillota</taxon>
        <taxon>Bacilli</taxon>
        <taxon>Lactobacillales</taxon>
        <taxon>Streptococcaceae</taxon>
        <taxon>Streptococcus</taxon>
    </lineage>
</organism>
<gene>
    <name evidence="1" type="primary">tsaD</name>
    <name type="synonym">gcp</name>
    <name type="ordered locus">MGAS9429_Spy1596</name>
</gene>
<feature type="chain" id="PRO_0000303566" description="tRNA N6-adenosine threonylcarbamoyltransferase">
    <location>
        <begin position="1"/>
        <end position="342"/>
    </location>
</feature>
<feature type="binding site" evidence="1">
    <location>
        <position position="114"/>
    </location>
    <ligand>
        <name>Fe cation</name>
        <dbReference type="ChEBI" id="CHEBI:24875"/>
    </ligand>
</feature>
<feature type="binding site" evidence="1">
    <location>
        <position position="118"/>
    </location>
    <ligand>
        <name>Fe cation</name>
        <dbReference type="ChEBI" id="CHEBI:24875"/>
    </ligand>
</feature>
<feature type="binding site" evidence="1">
    <location>
        <begin position="136"/>
        <end position="140"/>
    </location>
    <ligand>
        <name>substrate</name>
    </ligand>
</feature>
<feature type="binding site" evidence="1">
    <location>
        <position position="169"/>
    </location>
    <ligand>
        <name>substrate</name>
    </ligand>
</feature>
<feature type="binding site" evidence="1">
    <location>
        <position position="182"/>
    </location>
    <ligand>
        <name>substrate</name>
    </ligand>
</feature>
<feature type="binding site" evidence="1">
    <location>
        <position position="186"/>
    </location>
    <ligand>
        <name>substrate</name>
    </ligand>
</feature>
<feature type="binding site" evidence="1">
    <location>
        <position position="275"/>
    </location>
    <ligand>
        <name>substrate</name>
    </ligand>
</feature>
<feature type="binding site" evidence="1">
    <location>
        <position position="301"/>
    </location>
    <ligand>
        <name>Fe cation</name>
        <dbReference type="ChEBI" id="CHEBI:24875"/>
    </ligand>
</feature>
<proteinExistence type="inferred from homology"/>